<name>S14L6_HUMAN</name>
<organism>
    <name type="scientific">Homo sapiens</name>
    <name type="common">Human</name>
    <dbReference type="NCBI Taxonomy" id="9606"/>
    <lineage>
        <taxon>Eukaryota</taxon>
        <taxon>Metazoa</taxon>
        <taxon>Chordata</taxon>
        <taxon>Craniata</taxon>
        <taxon>Vertebrata</taxon>
        <taxon>Euteleostomi</taxon>
        <taxon>Mammalia</taxon>
        <taxon>Eutheria</taxon>
        <taxon>Euarchontoglires</taxon>
        <taxon>Primates</taxon>
        <taxon>Haplorrhini</taxon>
        <taxon>Catarrhini</taxon>
        <taxon>Hominidae</taxon>
        <taxon>Homo</taxon>
    </lineage>
</organism>
<protein>
    <recommendedName>
        <fullName>SEC14-like protein 6</fullName>
    </recommendedName>
</protein>
<reference key="1">
    <citation type="journal article" date="1999" name="Nature">
        <title>The DNA sequence of human chromosome 22.</title>
        <authorList>
            <person name="Dunham I."/>
            <person name="Hunt A.R."/>
            <person name="Collins J.E."/>
            <person name="Bruskiewich R."/>
            <person name="Beare D.M."/>
            <person name="Clamp M."/>
            <person name="Smink L.J."/>
            <person name="Ainscough R."/>
            <person name="Almeida J.P."/>
            <person name="Babbage A.K."/>
            <person name="Bagguley C."/>
            <person name="Bailey J."/>
            <person name="Barlow K.F."/>
            <person name="Bates K.N."/>
            <person name="Beasley O.P."/>
            <person name="Bird C.P."/>
            <person name="Blakey S.E."/>
            <person name="Bridgeman A.M."/>
            <person name="Buck D."/>
            <person name="Burgess J."/>
            <person name="Burrill W.D."/>
            <person name="Burton J."/>
            <person name="Carder C."/>
            <person name="Carter N.P."/>
            <person name="Chen Y."/>
            <person name="Clark G."/>
            <person name="Clegg S.M."/>
            <person name="Cobley V.E."/>
            <person name="Cole C.G."/>
            <person name="Collier R.E."/>
            <person name="Connor R."/>
            <person name="Conroy D."/>
            <person name="Corby N.R."/>
            <person name="Coville G.J."/>
            <person name="Cox A.V."/>
            <person name="Davis J."/>
            <person name="Dawson E."/>
            <person name="Dhami P.D."/>
            <person name="Dockree C."/>
            <person name="Dodsworth S.J."/>
            <person name="Durbin R.M."/>
            <person name="Ellington A.G."/>
            <person name="Evans K.L."/>
            <person name="Fey J.M."/>
            <person name="Fleming K."/>
            <person name="French L."/>
            <person name="Garner A.A."/>
            <person name="Gilbert J.G.R."/>
            <person name="Goward M.E."/>
            <person name="Grafham D.V."/>
            <person name="Griffiths M.N.D."/>
            <person name="Hall C."/>
            <person name="Hall R.E."/>
            <person name="Hall-Tamlyn G."/>
            <person name="Heathcott R.W."/>
            <person name="Ho S."/>
            <person name="Holmes S."/>
            <person name="Hunt S.E."/>
            <person name="Jones M.C."/>
            <person name="Kershaw J."/>
            <person name="Kimberley A.M."/>
            <person name="King A."/>
            <person name="Laird G.K."/>
            <person name="Langford C.F."/>
            <person name="Leversha M.A."/>
            <person name="Lloyd C."/>
            <person name="Lloyd D.M."/>
            <person name="Martyn I.D."/>
            <person name="Mashreghi-Mohammadi M."/>
            <person name="Matthews L.H."/>
            <person name="Mccann O.T."/>
            <person name="Mcclay J."/>
            <person name="Mclaren S."/>
            <person name="McMurray A.A."/>
            <person name="Milne S.A."/>
            <person name="Mortimore B.J."/>
            <person name="Odell C.N."/>
            <person name="Pavitt R."/>
            <person name="Pearce A.V."/>
            <person name="Pearson D."/>
            <person name="Phillimore B.J.C.T."/>
            <person name="Phillips S.H."/>
            <person name="Plumb R.W."/>
            <person name="Ramsay H."/>
            <person name="Ramsey Y."/>
            <person name="Rogers L."/>
            <person name="Ross M.T."/>
            <person name="Scott C.E."/>
            <person name="Sehra H.K."/>
            <person name="Skuce C.D."/>
            <person name="Smalley S."/>
            <person name="Smith M.L."/>
            <person name="Soderlund C."/>
            <person name="Spragon L."/>
            <person name="Steward C.A."/>
            <person name="Sulston J.E."/>
            <person name="Swann R.M."/>
            <person name="Vaudin M."/>
            <person name="Wall M."/>
            <person name="Wallis J.M."/>
            <person name="Whiteley M.N."/>
            <person name="Willey D.L."/>
            <person name="Williams L."/>
            <person name="Williams S.A."/>
            <person name="Williamson H."/>
            <person name="Wilmer T.E."/>
            <person name="Wilming L."/>
            <person name="Wright C.L."/>
            <person name="Hubbard T."/>
            <person name="Bentley D.R."/>
            <person name="Beck S."/>
            <person name="Rogers J."/>
            <person name="Shimizu N."/>
            <person name="Minoshima S."/>
            <person name="Kawasaki K."/>
            <person name="Sasaki T."/>
            <person name="Asakawa S."/>
            <person name="Kudoh J."/>
            <person name="Shintani A."/>
            <person name="Shibuya K."/>
            <person name="Yoshizaki Y."/>
            <person name="Aoki N."/>
            <person name="Mitsuyama S."/>
            <person name="Roe B.A."/>
            <person name="Chen F."/>
            <person name="Chu L."/>
            <person name="Crabtree J."/>
            <person name="Deschamps S."/>
            <person name="Do A."/>
            <person name="Do T."/>
            <person name="Dorman A."/>
            <person name="Fang F."/>
            <person name="Fu Y."/>
            <person name="Hu P."/>
            <person name="Hua A."/>
            <person name="Kenton S."/>
            <person name="Lai H."/>
            <person name="Lao H.I."/>
            <person name="Lewis J."/>
            <person name="Lewis S."/>
            <person name="Lin S.-P."/>
            <person name="Loh P."/>
            <person name="Malaj E."/>
            <person name="Nguyen T."/>
            <person name="Pan H."/>
            <person name="Phan S."/>
            <person name="Qi S."/>
            <person name="Qian Y."/>
            <person name="Ray L."/>
            <person name="Ren Q."/>
            <person name="Shaull S."/>
            <person name="Sloan D."/>
            <person name="Song L."/>
            <person name="Wang Q."/>
            <person name="Wang Y."/>
            <person name="Wang Z."/>
            <person name="White J."/>
            <person name="Willingham D."/>
            <person name="Wu H."/>
            <person name="Yao Z."/>
            <person name="Zhan M."/>
            <person name="Zhang G."/>
            <person name="Chissoe S."/>
            <person name="Murray J."/>
            <person name="Miller N."/>
            <person name="Minx P."/>
            <person name="Fulton R."/>
            <person name="Johnson D."/>
            <person name="Bemis G."/>
            <person name="Bentley D."/>
            <person name="Bradshaw H."/>
            <person name="Bourne S."/>
            <person name="Cordes M."/>
            <person name="Du Z."/>
            <person name="Fulton L."/>
            <person name="Goela D."/>
            <person name="Graves T."/>
            <person name="Hawkins J."/>
            <person name="Hinds K."/>
            <person name="Kemp K."/>
            <person name="Latreille P."/>
            <person name="Layman D."/>
            <person name="Ozersky P."/>
            <person name="Rohlfing T."/>
            <person name="Scheet P."/>
            <person name="Walker C."/>
            <person name="Wamsley A."/>
            <person name="Wohldmann P."/>
            <person name="Pepin K."/>
            <person name="Nelson J."/>
            <person name="Korf I."/>
            <person name="Bedell J.A."/>
            <person name="Hillier L.W."/>
            <person name="Mardis E."/>
            <person name="Waterston R."/>
            <person name="Wilson R."/>
            <person name="Emanuel B.S."/>
            <person name="Shaikh T."/>
            <person name="Kurahashi H."/>
            <person name="Saitta S."/>
            <person name="Budarf M.L."/>
            <person name="McDermid H.E."/>
            <person name="Johnson A."/>
            <person name="Wong A.C.C."/>
            <person name="Morrow B.E."/>
            <person name="Edelmann L."/>
            <person name="Kim U.J."/>
            <person name="Shizuya H."/>
            <person name="Simon M.I."/>
            <person name="Dumanski J.P."/>
            <person name="Peyrard M."/>
            <person name="Kedra D."/>
            <person name="Seroussi E."/>
            <person name="Fransson I."/>
            <person name="Tapia I."/>
            <person name="Bruder C.E."/>
            <person name="O'Brien K.P."/>
            <person name="Wilkinson P."/>
            <person name="Bodenteich A."/>
            <person name="Hartman K."/>
            <person name="Hu X."/>
            <person name="Khan A.S."/>
            <person name="Lane L."/>
            <person name="Tilahun Y."/>
            <person name="Wright H."/>
        </authorList>
    </citation>
    <scope>NUCLEOTIDE SEQUENCE [LARGE SCALE GENOMIC DNA]</scope>
</reference>
<feature type="chain" id="PRO_0000410725" description="SEC14-like protein 6">
    <location>
        <begin position="1"/>
        <end position="397"/>
    </location>
</feature>
<feature type="domain" description="CRAL-TRIO" evidence="1">
    <location>
        <begin position="76"/>
        <end position="249"/>
    </location>
</feature>
<feature type="domain" description="GOLD" evidence="2">
    <location>
        <begin position="252"/>
        <end position="383"/>
    </location>
</feature>
<dbReference type="EMBL" id="AC004832">
    <property type="status" value="NOT_ANNOTATED_CDS"/>
    <property type="molecule type" value="Genomic_DNA"/>
</dbReference>
<dbReference type="CCDS" id="CCDS54518.1"/>
<dbReference type="RefSeq" id="NP_001180265.2">
    <property type="nucleotide sequence ID" value="NM_001193336.2"/>
</dbReference>
<dbReference type="SMR" id="B5MCN3"/>
<dbReference type="FunCoup" id="B5MCN3">
    <property type="interactions" value="109"/>
</dbReference>
<dbReference type="STRING" id="9606.ENSP00000385695"/>
<dbReference type="GlyGen" id="B5MCN3">
    <property type="glycosylation" value="1 site, 1 O-linked glycan (1 site)"/>
</dbReference>
<dbReference type="iPTMnet" id="B5MCN3"/>
<dbReference type="PhosphoSitePlus" id="B5MCN3"/>
<dbReference type="BioMuta" id="SEC14L6"/>
<dbReference type="jPOST" id="B5MCN3"/>
<dbReference type="MassIVE" id="B5MCN3"/>
<dbReference type="PaxDb" id="9606-ENSP00000385695"/>
<dbReference type="PeptideAtlas" id="B5MCN3"/>
<dbReference type="ProteomicsDB" id="6075"/>
<dbReference type="Antibodypedia" id="77781">
    <property type="antibodies" value="4 antibodies from 4 providers"/>
</dbReference>
<dbReference type="DNASU" id="730005"/>
<dbReference type="Ensembl" id="ENST00000402034.7">
    <property type="protein sequence ID" value="ENSP00000385695.1"/>
    <property type="gene ID" value="ENSG00000214491.9"/>
</dbReference>
<dbReference type="GeneID" id="730005"/>
<dbReference type="KEGG" id="hsa:730005"/>
<dbReference type="MANE-Select" id="ENST00000402034.7">
    <property type="protein sequence ID" value="ENSP00000385695.1"/>
    <property type="RefSeq nucleotide sequence ID" value="NM_001193336.4"/>
    <property type="RefSeq protein sequence ID" value="NP_001180265.2"/>
</dbReference>
<dbReference type="UCSC" id="uc021wnu.2">
    <property type="organism name" value="human"/>
</dbReference>
<dbReference type="AGR" id="HGNC:40047"/>
<dbReference type="CTD" id="730005"/>
<dbReference type="DisGeNET" id="730005"/>
<dbReference type="GeneCards" id="SEC14L6"/>
<dbReference type="HGNC" id="HGNC:40047">
    <property type="gene designation" value="SEC14L6"/>
</dbReference>
<dbReference type="HPA" id="ENSG00000214491">
    <property type="expression patterns" value="Tissue enhanced (epididymis, parathyroid gland)"/>
</dbReference>
<dbReference type="neXtProt" id="NX_B5MCN3"/>
<dbReference type="OpenTargets" id="ENSG00000214491"/>
<dbReference type="VEuPathDB" id="HostDB:ENSG00000214491"/>
<dbReference type="eggNOG" id="KOG1471">
    <property type="taxonomic scope" value="Eukaryota"/>
</dbReference>
<dbReference type="GeneTree" id="ENSGT00940000165472"/>
<dbReference type="HOGENOM" id="CLU_014001_2_1_1"/>
<dbReference type="InParanoid" id="B5MCN3"/>
<dbReference type="OMA" id="LWKPGIE"/>
<dbReference type="OrthoDB" id="1434354at2759"/>
<dbReference type="PAN-GO" id="B5MCN3">
    <property type="GO annotations" value="1 GO annotation based on evolutionary models"/>
</dbReference>
<dbReference type="PhylomeDB" id="B5MCN3"/>
<dbReference type="TreeFam" id="TF313988"/>
<dbReference type="PathwayCommons" id="B5MCN3"/>
<dbReference type="BioGRID-ORCS" id="730005">
    <property type="hits" value="10 hits in 1143 CRISPR screens"/>
</dbReference>
<dbReference type="ChiTaRS" id="SEC14L6">
    <property type="organism name" value="human"/>
</dbReference>
<dbReference type="GenomeRNAi" id="730005"/>
<dbReference type="Pharos" id="B5MCN3">
    <property type="development level" value="Tdark"/>
</dbReference>
<dbReference type="Proteomes" id="UP000005640">
    <property type="component" value="Chromosome 22"/>
</dbReference>
<dbReference type="RNAct" id="B5MCN3">
    <property type="molecule type" value="protein"/>
</dbReference>
<dbReference type="Bgee" id="ENSG00000214491">
    <property type="expression patterns" value="Expressed in metanephros cortex and 94 other cell types or tissues"/>
</dbReference>
<dbReference type="ExpressionAtlas" id="B5MCN3">
    <property type="expression patterns" value="baseline and differential"/>
</dbReference>
<dbReference type="GO" id="GO:0005737">
    <property type="term" value="C:cytoplasm"/>
    <property type="evidence" value="ECO:0000318"/>
    <property type="project" value="GO_Central"/>
</dbReference>
<dbReference type="CDD" id="cd00170">
    <property type="entry name" value="SEC14"/>
    <property type="match status" value="1"/>
</dbReference>
<dbReference type="FunFam" id="3.40.525.10:FF:000009">
    <property type="entry name" value="SEC14-like 2 (S. cerevisiae)"/>
    <property type="match status" value="1"/>
</dbReference>
<dbReference type="Gene3D" id="3.40.525.10">
    <property type="entry name" value="CRAL-TRIO lipid binding domain"/>
    <property type="match status" value="1"/>
</dbReference>
<dbReference type="Gene3D" id="2.60.120.680">
    <property type="entry name" value="GOLD domain"/>
    <property type="match status" value="1"/>
</dbReference>
<dbReference type="InterPro" id="IPR001251">
    <property type="entry name" value="CRAL-TRIO_dom"/>
</dbReference>
<dbReference type="InterPro" id="IPR036865">
    <property type="entry name" value="CRAL-TRIO_dom_sf"/>
</dbReference>
<dbReference type="InterPro" id="IPR011074">
    <property type="entry name" value="CRAL/TRIO_N_dom"/>
</dbReference>
<dbReference type="InterPro" id="IPR036273">
    <property type="entry name" value="CRAL/TRIO_N_dom_sf"/>
</dbReference>
<dbReference type="InterPro" id="IPR009038">
    <property type="entry name" value="GOLD_dom"/>
</dbReference>
<dbReference type="InterPro" id="IPR036598">
    <property type="entry name" value="GOLD_dom_sf"/>
</dbReference>
<dbReference type="InterPro" id="IPR051064">
    <property type="entry name" value="SEC14/CRAL-TRIO_domain"/>
</dbReference>
<dbReference type="PANTHER" id="PTHR23324">
    <property type="entry name" value="SEC14 RELATED PROTEIN"/>
    <property type="match status" value="1"/>
</dbReference>
<dbReference type="PANTHER" id="PTHR23324:SF41">
    <property type="entry name" value="SEC14-LIKE PROTEIN 6-RELATED"/>
    <property type="match status" value="1"/>
</dbReference>
<dbReference type="Pfam" id="PF00650">
    <property type="entry name" value="CRAL_TRIO"/>
    <property type="match status" value="1"/>
</dbReference>
<dbReference type="PRINTS" id="PR00180">
    <property type="entry name" value="CRETINALDHBP"/>
</dbReference>
<dbReference type="SMART" id="SM01100">
    <property type="entry name" value="CRAL_TRIO_N"/>
    <property type="match status" value="1"/>
</dbReference>
<dbReference type="SMART" id="SM00516">
    <property type="entry name" value="SEC14"/>
    <property type="match status" value="1"/>
</dbReference>
<dbReference type="SUPFAM" id="SSF52087">
    <property type="entry name" value="CRAL/TRIO domain"/>
    <property type="match status" value="1"/>
</dbReference>
<dbReference type="SUPFAM" id="SSF46938">
    <property type="entry name" value="CRAL/TRIO N-terminal domain"/>
    <property type="match status" value="1"/>
</dbReference>
<dbReference type="SUPFAM" id="SSF101576">
    <property type="entry name" value="Supernatant protein factor (SPF), C-terminal domain"/>
    <property type="match status" value="1"/>
</dbReference>
<dbReference type="PROSITE" id="PS50191">
    <property type="entry name" value="CRAL_TRIO"/>
    <property type="match status" value="1"/>
</dbReference>
<dbReference type="PROSITE" id="PS50866">
    <property type="entry name" value="GOLD"/>
    <property type="match status" value="1"/>
</dbReference>
<accession>B5MCN3</accession>
<evidence type="ECO:0000255" key="1">
    <source>
        <dbReference type="PROSITE-ProRule" id="PRU00056"/>
    </source>
</evidence>
<evidence type="ECO:0000255" key="2">
    <source>
        <dbReference type="PROSITE-ProRule" id="PRU00096"/>
    </source>
</evidence>
<keyword id="KW-1185">Reference proteome</keyword>
<sequence length="397" mass="45364">MSGQVGDLSPSQEKSLAQFRENIQDVLSALPNPDDYFLLRWLQARSFDLQKSEDMLRKHMEFRKQQDLANILAWQPPEVVRLYNANGICGHDGEGSPVWYHIVGSLDPKGLLLSASKQELLRDSFRSCELLLRECELQSQKLGKRVEKIIAIFGLEGLGLRDLWKPGIELLQEFFSALEANYPEILKSLIVVRAPKLFAVAFNLVKSYMSEETRRKVVILGDNWKQELTKFISPDQLPVEFGGTMTDPDGNPKCLTKINYGGEVPKSYYLCKQVRLQYEHTRSVGRGSSLQVENEILFPGCVLRWQFASDGGDIGFGVFLKTKMGERQRAREMTEVLPSQRYNAHMVPEDGILTCLQAGSYVLRFYNTYSLVHSKRISYTVEVLLPDQTFMEKMEKF</sequence>
<gene>
    <name type="primary">SEC14L6</name>
</gene>
<proteinExistence type="predicted"/>